<accession>Q97AI2</accession>
<proteinExistence type="inferred from homology"/>
<comment type="function">
    <text evidence="1">DNA-dependent ATPase and 3'-5' DNA helicase that may be involved in repair of stalled replication forks.</text>
</comment>
<comment type="catalytic activity">
    <reaction evidence="1">
        <text>Couples ATP hydrolysis with the unwinding of duplex DNA by translocating in the 3'-5' direction.</text>
        <dbReference type="EC" id="5.6.2.4"/>
    </reaction>
</comment>
<comment type="catalytic activity">
    <reaction evidence="1">
        <text>ATP + H2O = ADP + phosphate + H(+)</text>
        <dbReference type="Rhea" id="RHEA:13065"/>
        <dbReference type="ChEBI" id="CHEBI:15377"/>
        <dbReference type="ChEBI" id="CHEBI:15378"/>
        <dbReference type="ChEBI" id="CHEBI:30616"/>
        <dbReference type="ChEBI" id="CHEBI:43474"/>
        <dbReference type="ChEBI" id="CHEBI:456216"/>
        <dbReference type="EC" id="5.6.2.4"/>
    </reaction>
</comment>
<comment type="subunit">
    <text evidence="1">Monomer.</text>
</comment>
<comment type="similarity">
    <text evidence="1">Belongs to the helicase family. Hel308 subfamily.</text>
</comment>
<gene>
    <name evidence="1" type="primary">hel308</name>
    <name type="ordered locus">TV0828</name>
    <name type="ORF">TVG0843689</name>
</gene>
<protein>
    <recommendedName>
        <fullName evidence="1">ATP-dependent DNA helicase Hel308</fullName>
        <ecNumber evidence="1">5.6.2.4</ecNumber>
    </recommendedName>
    <alternativeName>
        <fullName evidence="1">DNA 3'-5' helicase Hel308</fullName>
    </alternativeName>
</protein>
<sequence>MKISDLGYDESFLDLFEGNDFELYDHQRMAIEQFRKGKNIMVSVPTAAGKTLIAYSAIYETFKKKLKSIYIVPLRSLAMEKYEELSRLRELGMRVKLSIGNYDDTPDFIKRYDVVILTSEKADSLMHHDPYMMEEVGLMVIDEIHMIGDEYRGPTLETVITTARYVNPETRIIALSATVSNASEIAEWLNASLIKSSFRPVPLKVGILYRNRLFLDGDARSDVDINLLVKETVDDGGQVLIFVSSRKRAEDMAKNLSQLFDPINDLKVSSEDANVYDDLLNEMLPHGVSFHHAGLSNEQRSFIEKAFRHRKLKVIVATPTLAAGVNLPARLVIVKDVTRYGDLGITYLSNMEVKQMIGRAGRPGYDQYGIGIIYAASANSYQVVKEYISEEPEPVDSYIGKPEKVRFNTLAAIAMGLATSQVEMEEFYRSTFYYAQNGEDEIPNRINESIKFLKENGFIKEKDSLRATEFGKMISNLYIDPESAIILKKYFDDNDDIDTALYYISLCREIAPINMQDDYAAMEFLESIGHIDGDIEAAKTALVLREWISEASTRRIFEMYGVAPGDLQARVNNADWISYSLAHLASIFKPERRRKLEILNMRIKEGIREELMDLVLIPAIGRVRARRLYEAGIHNVQELAFSDPSRIKMLYGFSDTLANAVVKRAKAIVSERIR</sequence>
<keyword id="KW-0067">ATP-binding</keyword>
<keyword id="KW-0227">DNA damage</keyword>
<keyword id="KW-0234">DNA repair</keyword>
<keyword id="KW-0238">DNA-binding</keyword>
<keyword id="KW-0347">Helicase</keyword>
<keyword id="KW-0378">Hydrolase</keyword>
<keyword id="KW-0413">Isomerase</keyword>
<keyword id="KW-0547">Nucleotide-binding</keyword>
<name>HELS_THEVO</name>
<reference key="1">
    <citation type="journal article" date="2000" name="Proc. Natl. Acad. Sci. U.S.A.">
        <title>Archaeal adaptation to higher temperatures revealed by genomic sequence of Thermoplasma volcanium.</title>
        <authorList>
            <person name="Kawashima T."/>
            <person name="Amano N."/>
            <person name="Koike H."/>
            <person name="Makino S."/>
            <person name="Higuchi S."/>
            <person name="Kawashima-Ohya Y."/>
            <person name="Watanabe K."/>
            <person name="Yamazaki M."/>
            <person name="Kanehori K."/>
            <person name="Kawamoto T."/>
            <person name="Nunoshiba T."/>
            <person name="Yamamoto Y."/>
            <person name="Aramaki H."/>
            <person name="Makino K."/>
            <person name="Suzuki M."/>
        </authorList>
    </citation>
    <scope>NUCLEOTIDE SEQUENCE [LARGE SCALE GENOMIC DNA]</scope>
    <source>
        <strain>ATCC 51530 / DSM 4299 / JCM 9571 / NBRC 15438 / GSS1</strain>
    </source>
</reference>
<evidence type="ECO:0000255" key="1">
    <source>
        <dbReference type="HAMAP-Rule" id="MF_00442"/>
    </source>
</evidence>
<organism>
    <name type="scientific">Thermoplasma volcanium (strain ATCC 51530 / DSM 4299 / JCM 9571 / NBRC 15438 / GSS1)</name>
    <dbReference type="NCBI Taxonomy" id="273116"/>
    <lineage>
        <taxon>Archaea</taxon>
        <taxon>Methanobacteriati</taxon>
        <taxon>Thermoplasmatota</taxon>
        <taxon>Thermoplasmata</taxon>
        <taxon>Thermoplasmatales</taxon>
        <taxon>Thermoplasmataceae</taxon>
        <taxon>Thermoplasma</taxon>
    </lineage>
</organism>
<dbReference type="EC" id="5.6.2.4" evidence="1"/>
<dbReference type="EMBL" id="BA000011">
    <property type="protein sequence ID" value="BAB59970.1"/>
    <property type="molecule type" value="Genomic_DNA"/>
</dbReference>
<dbReference type="RefSeq" id="WP_010917072.1">
    <property type="nucleotide sequence ID" value="NC_002689.2"/>
</dbReference>
<dbReference type="SMR" id="Q97AI2"/>
<dbReference type="STRING" id="273116.gene:9381620"/>
<dbReference type="PaxDb" id="273116-14325044"/>
<dbReference type="GeneID" id="1441920"/>
<dbReference type="KEGG" id="tvo:TVG0843689"/>
<dbReference type="eggNOG" id="arCOG00553">
    <property type="taxonomic scope" value="Archaea"/>
</dbReference>
<dbReference type="HOGENOM" id="CLU_006553_3_0_2"/>
<dbReference type="OrthoDB" id="371946at2157"/>
<dbReference type="PhylomeDB" id="Q97AI2"/>
<dbReference type="Proteomes" id="UP000001017">
    <property type="component" value="Chromosome"/>
</dbReference>
<dbReference type="GO" id="GO:0043138">
    <property type="term" value="F:3'-5' DNA helicase activity"/>
    <property type="evidence" value="ECO:0007669"/>
    <property type="project" value="UniProtKB-UniRule"/>
</dbReference>
<dbReference type="GO" id="GO:0005524">
    <property type="term" value="F:ATP binding"/>
    <property type="evidence" value="ECO:0007669"/>
    <property type="project" value="UniProtKB-UniRule"/>
</dbReference>
<dbReference type="GO" id="GO:0016887">
    <property type="term" value="F:ATP hydrolysis activity"/>
    <property type="evidence" value="ECO:0007669"/>
    <property type="project" value="RHEA"/>
</dbReference>
<dbReference type="GO" id="GO:0003677">
    <property type="term" value="F:DNA binding"/>
    <property type="evidence" value="ECO:0007669"/>
    <property type="project" value="UniProtKB-UniRule"/>
</dbReference>
<dbReference type="GO" id="GO:0006281">
    <property type="term" value="P:DNA repair"/>
    <property type="evidence" value="ECO:0007669"/>
    <property type="project" value="UniProtKB-UniRule"/>
</dbReference>
<dbReference type="CDD" id="cd18795">
    <property type="entry name" value="SF2_C_Ski2"/>
    <property type="match status" value="1"/>
</dbReference>
<dbReference type="Gene3D" id="1.10.3380.30">
    <property type="match status" value="1"/>
</dbReference>
<dbReference type="Gene3D" id="1.10.150.20">
    <property type="entry name" value="5' to 3' exonuclease, C-terminal subdomain"/>
    <property type="match status" value="1"/>
</dbReference>
<dbReference type="Gene3D" id="3.40.50.300">
    <property type="entry name" value="P-loop containing nucleotide triphosphate hydrolases"/>
    <property type="match status" value="2"/>
</dbReference>
<dbReference type="HAMAP" id="MF_00442">
    <property type="entry name" value="Helicase_Hel308"/>
    <property type="match status" value="1"/>
</dbReference>
<dbReference type="InterPro" id="IPR011545">
    <property type="entry name" value="DEAD/DEAH_box_helicase_dom"/>
</dbReference>
<dbReference type="InterPro" id="IPR048772">
    <property type="entry name" value="Hel308-like_dom4"/>
</dbReference>
<dbReference type="InterPro" id="IPR050474">
    <property type="entry name" value="Hel308_SKI2-like"/>
</dbReference>
<dbReference type="InterPro" id="IPR014001">
    <property type="entry name" value="Helicase_ATP-bd"/>
</dbReference>
<dbReference type="InterPro" id="IPR001650">
    <property type="entry name" value="Helicase_C-like"/>
</dbReference>
<dbReference type="InterPro" id="IPR022965">
    <property type="entry name" value="Helicase_Hel308"/>
</dbReference>
<dbReference type="InterPro" id="IPR046931">
    <property type="entry name" value="HTH_61"/>
</dbReference>
<dbReference type="InterPro" id="IPR027417">
    <property type="entry name" value="P-loop_NTPase"/>
</dbReference>
<dbReference type="InterPro" id="IPR036390">
    <property type="entry name" value="WH_DNA-bd_sf"/>
</dbReference>
<dbReference type="NCBIfam" id="NF002251">
    <property type="entry name" value="PRK01172.1"/>
    <property type="match status" value="1"/>
</dbReference>
<dbReference type="PANTHER" id="PTHR47961:SF10">
    <property type="entry name" value="ATP-DEPENDENT DNA HELICASE HEL308"/>
    <property type="match status" value="1"/>
</dbReference>
<dbReference type="PANTHER" id="PTHR47961">
    <property type="entry name" value="DNA POLYMERASE THETA, PUTATIVE (AFU_ORTHOLOGUE AFUA_1G05260)-RELATED"/>
    <property type="match status" value="1"/>
</dbReference>
<dbReference type="Pfam" id="PF00270">
    <property type="entry name" value="DEAD"/>
    <property type="match status" value="1"/>
</dbReference>
<dbReference type="Pfam" id="PF00271">
    <property type="entry name" value="Helicase_C"/>
    <property type="match status" value="1"/>
</dbReference>
<dbReference type="Pfam" id="PF21280">
    <property type="entry name" value="Helicase_dom4_arc"/>
    <property type="match status" value="1"/>
</dbReference>
<dbReference type="Pfam" id="PF14520">
    <property type="entry name" value="HHH_5"/>
    <property type="match status" value="1"/>
</dbReference>
<dbReference type="Pfam" id="PF20470">
    <property type="entry name" value="HTH_61"/>
    <property type="match status" value="1"/>
</dbReference>
<dbReference type="SMART" id="SM00487">
    <property type="entry name" value="DEXDc"/>
    <property type="match status" value="1"/>
</dbReference>
<dbReference type="SMART" id="SM00490">
    <property type="entry name" value="HELICc"/>
    <property type="match status" value="1"/>
</dbReference>
<dbReference type="SUPFAM" id="SSF52540">
    <property type="entry name" value="P-loop containing nucleoside triphosphate hydrolases"/>
    <property type="match status" value="1"/>
</dbReference>
<dbReference type="SUPFAM" id="SSF158702">
    <property type="entry name" value="Sec63 N-terminal domain-like"/>
    <property type="match status" value="1"/>
</dbReference>
<dbReference type="SUPFAM" id="SSF46785">
    <property type="entry name" value="Winged helix' DNA-binding domain"/>
    <property type="match status" value="1"/>
</dbReference>
<dbReference type="PROSITE" id="PS51192">
    <property type="entry name" value="HELICASE_ATP_BIND_1"/>
    <property type="match status" value="1"/>
</dbReference>
<dbReference type="PROSITE" id="PS51194">
    <property type="entry name" value="HELICASE_CTER"/>
    <property type="match status" value="1"/>
</dbReference>
<feature type="chain" id="PRO_0000102115" description="ATP-dependent DNA helicase Hel308">
    <location>
        <begin position="1"/>
        <end position="674"/>
    </location>
</feature>
<feature type="domain" description="Helicase ATP-binding" evidence="1">
    <location>
        <begin position="31"/>
        <end position="197"/>
    </location>
</feature>
<feature type="domain" description="Helicase C-terminal" evidence="1">
    <location>
        <begin position="224"/>
        <end position="411"/>
    </location>
</feature>
<feature type="short sequence motif" description="DEAH box" evidence="1">
    <location>
        <begin position="142"/>
        <end position="145"/>
    </location>
</feature>
<feature type="binding site" evidence="1">
    <location>
        <position position="27"/>
    </location>
    <ligand>
        <name>ATP</name>
        <dbReference type="ChEBI" id="CHEBI:30616"/>
    </ligand>
</feature>
<feature type="binding site" evidence="1">
    <location>
        <begin position="44"/>
        <end position="51"/>
    </location>
    <ligand>
        <name>ATP</name>
        <dbReference type="ChEBI" id="CHEBI:30616"/>
    </ligand>
</feature>